<reference key="1">
    <citation type="journal article" date="2001" name="Nature">
        <title>Genome sequence of enterohaemorrhagic Escherichia coli O157:H7.</title>
        <authorList>
            <person name="Perna N.T."/>
            <person name="Plunkett G. III"/>
            <person name="Burland V."/>
            <person name="Mau B."/>
            <person name="Glasner J.D."/>
            <person name="Rose D.J."/>
            <person name="Mayhew G.F."/>
            <person name="Evans P.S."/>
            <person name="Gregor J."/>
            <person name="Kirkpatrick H.A."/>
            <person name="Posfai G."/>
            <person name="Hackett J."/>
            <person name="Klink S."/>
            <person name="Boutin A."/>
            <person name="Shao Y."/>
            <person name="Miller L."/>
            <person name="Grotbeck E.J."/>
            <person name="Davis N.W."/>
            <person name="Lim A."/>
            <person name="Dimalanta E.T."/>
            <person name="Potamousis K."/>
            <person name="Apodaca J."/>
            <person name="Anantharaman T.S."/>
            <person name="Lin J."/>
            <person name="Yen G."/>
            <person name="Schwartz D.C."/>
            <person name="Welch R.A."/>
            <person name="Blattner F.R."/>
        </authorList>
    </citation>
    <scope>NUCLEOTIDE SEQUENCE [LARGE SCALE GENOMIC DNA]</scope>
    <source>
        <strain>O157:H7 / EDL933 / ATCC 700927 / EHEC</strain>
    </source>
</reference>
<reference key="2">
    <citation type="journal article" date="2001" name="DNA Res.">
        <title>Complete genome sequence of enterohemorrhagic Escherichia coli O157:H7 and genomic comparison with a laboratory strain K-12.</title>
        <authorList>
            <person name="Hayashi T."/>
            <person name="Makino K."/>
            <person name="Ohnishi M."/>
            <person name="Kurokawa K."/>
            <person name="Ishii K."/>
            <person name="Yokoyama K."/>
            <person name="Han C.-G."/>
            <person name="Ohtsubo E."/>
            <person name="Nakayama K."/>
            <person name="Murata T."/>
            <person name="Tanaka M."/>
            <person name="Tobe T."/>
            <person name="Iida T."/>
            <person name="Takami H."/>
            <person name="Honda T."/>
            <person name="Sasakawa C."/>
            <person name="Ogasawara N."/>
            <person name="Yasunaga T."/>
            <person name="Kuhara S."/>
            <person name="Shiba T."/>
            <person name="Hattori M."/>
            <person name="Shinagawa H."/>
        </authorList>
    </citation>
    <scope>NUCLEOTIDE SEQUENCE [LARGE SCALE GENOMIC DNA]</scope>
    <source>
        <strain>O157:H7 / Sakai / RIMD 0509952 / EHEC</strain>
    </source>
</reference>
<reference key="3">
    <citation type="journal article" date="2007" name="Mol. Microbiol.">
        <title>EfeUOB (YcdNOB) is a tripartite, acid-induced and CpxAR-regulated, low-pH Fe2+ transporter that is cryptic in Escherichia coli K-12 but functional in E. coli O157:H7.</title>
        <authorList>
            <person name="Cao J."/>
            <person name="Woodhall M.R."/>
            <person name="Alvarez J."/>
            <person name="Cartron M.L."/>
            <person name="Andrews S.C."/>
        </authorList>
    </citation>
    <scope>SUBUNIT</scope>
    <source>
        <strain>O157:H7 / EDL933 / ATCC 700927 / EHEC</strain>
    </source>
</reference>
<feature type="signal peptide" evidence="2">
    <location>
        <begin position="1"/>
        <end position="26"/>
    </location>
</feature>
<feature type="chain" id="PRO_0000278555" description="Iron uptake system component EfeO">
    <location>
        <begin position="27"/>
        <end position="375"/>
    </location>
</feature>
<evidence type="ECO:0000250" key="1"/>
<evidence type="ECO:0000255" key="2"/>
<evidence type="ECO:0000269" key="3">
    <source>
    </source>
</evidence>
<evidence type="ECO:0000305" key="4"/>
<comment type="function">
    <text evidence="1">Involved in Fe(2+) uptake. Could be an iron-binding and/or electron-transfer component (By similarity).</text>
</comment>
<comment type="subunit">
    <text evidence="3">Monomer. Part of a ferrous iron transporter composed of EfeU, EfeO and EfeB.</text>
</comment>
<comment type="subcellular location">
    <subcellularLocation>
        <location evidence="1">Periplasm</location>
    </subcellularLocation>
</comment>
<comment type="similarity">
    <text evidence="4">Belongs to the EfeM/EfeO family.</text>
</comment>
<gene>
    <name type="primary">efeO</name>
    <name type="ordered locus">Z1520</name>
    <name type="ordered locus">ECs1264</name>
</gene>
<sequence>MTINFRRNALQLSVAALFSSAFMANAADVPQVKVTVTDKQCEPMTITVNAGKTQFIIQNHSQKALEWEILKGVMVVEERENIAPGFSQKMTANLQPGEYDMTCGLLTNPKGKLIVKGEATADAAQSDALLSLGGAITAYKAYVMAETTQLVTDTKAFTDAIKAGDIEKAKALYAPTRQHYERIEPIAELFSDLDGSIDAREDDYEQKAADPKFTGFHRLEKALFGDNTTKGMDQYADQLYTDVVDLQKRISELAFPPSKVVGGAAGLIEEVAASKISGEEDRYSHTDLWDFQANVEGSQKIVDLLRPQLQKANPELLAKVDANFKKVDTILAKYRTKDGFETYDKLTDADRNALKGPITALAEDLAQLRGVLGLD</sequence>
<organism>
    <name type="scientific">Escherichia coli O157:H7</name>
    <dbReference type="NCBI Taxonomy" id="83334"/>
    <lineage>
        <taxon>Bacteria</taxon>
        <taxon>Pseudomonadati</taxon>
        <taxon>Pseudomonadota</taxon>
        <taxon>Gammaproteobacteria</taxon>
        <taxon>Enterobacterales</taxon>
        <taxon>Enterobacteriaceae</taxon>
        <taxon>Escherichia</taxon>
    </lineage>
</organism>
<dbReference type="EMBL" id="AE005174">
    <property type="protein sequence ID" value="AAG55636.1"/>
    <property type="molecule type" value="Genomic_DNA"/>
</dbReference>
<dbReference type="EMBL" id="BA000007">
    <property type="protein sequence ID" value="BAB34687.1"/>
    <property type="molecule type" value="Genomic_DNA"/>
</dbReference>
<dbReference type="PIR" id="H85646">
    <property type="entry name" value="H85646"/>
</dbReference>
<dbReference type="PIR" id="H90786">
    <property type="entry name" value="H90786"/>
</dbReference>
<dbReference type="RefSeq" id="NP_309291.1">
    <property type="nucleotide sequence ID" value="NC_002695.1"/>
</dbReference>
<dbReference type="RefSeq" id="WP_000154396.1">
    <property type="nucleotide sequence ID" value="NZ_VOAI01000026.1"/>
</dbReference>
<dbReference type="SMR" id="Q8XAS6"/>
<dbReference type="STRING" id="155864.Z1520"/>
<dbReference type="GeneID" id="913843"/>
<dbReference type="KEGG" id="ece:Z1520"/>
<dbReference type="KEGG" id="ecs:ECs_1264"/>
<dbReference type="PATRIC" id="fig|386585.9.peg.1371"/>
<dbReference type="eggNOG" id="COG2822">
    <property type="taxonomic scope" value="Bacteria"/>
</dbReference>
<dbReference type="HOGENOM" id="CLU_050342_2_1_6"/>
<dbReference type="OMA" id="WTGWHRL"/>
<dbReference type="Proteomes" id="UP000000558">
    <property type="component" value="Chromosome"/>
</dbReference>
<dbReference type="Proteomes" id="UP000002519">
    <property type="component" value="Chromosome"/>
</dbReference>
<dbReference type="GO" id="GO:0042597">
    <property type="term" value="C:periplasmic space"/>
    <property type="evidence" value="ECO:0007669"/>
    <property type="project" value="UniProtKB-SubCell"/>
</dbReference>
<dbReference type="CDD" id="cd14656">
    <property type="entry name" value="Imelysin-like_EfeO"/>
    <property type="match status" value="1"/>
</dbReference>
<dbReference type="FunFam" id="1.20.1420.20:FF:000001">
    <property type="entry name" value="Iron uptake system component EfeO"/>
    <property type="match status" value="1"/>
</dbReference>
<dbReference type="FunFam" id="2.60.40.420:FF:000052">
    <property type="entry name" value="Iron uptake system component EfeO"/>
    <property type="match status" value="1"/>
</dbReference>
<dbReference type="Gene3D" id="2.60.40.420">
    <property type="entry name" value="Cupredoxins - blue copper proteins"/>
    <property type="match status" value="1"/>
</dbReference>
<dbReference type="Gene3D" id="1.20.1420.20">
    <property type="entry name" value="M75 peptidase, HXXE motif"/>
    <property type="match status" value="1"/>
</dbReference>
<dbReference type="InterPro" id="IPR008972">
    <property type="entry name" value="Cupredoxin"/>
</dbReference>
<dbReference type="InterPro" id="IPR050894">
    <property type="entry name" value="EfeM/EfeO_iron_uptake"/>
</dbReference>
<dbReference type="InterPro" id="IPR028096">
    <property type="entry name" value="EfeO_Cupredoxin"/>
</dbReference>
<dbReference type="InterPro" id="IPR018976">
    <property type="entry name" value="Imelysin-like"/>
</dbReference>
<dbReference type="InterPro" id="IPR034981">
    <property type="entry name" value="Imelysin-like_EfeO/Algp7"/>
</dbReference>
<dbReference type="InterPro" id="IPR038352">
    <property type="entry name" value="Imelysin_sf"/>
</dbReference>
<dbReference type="InterPro" id="IPR053377">
    <property type="entry name" value="Iron_uptake_EfeM/EfeO"/>
</dbReference>
<dbReference type="NCBIfam" id="NF041757">
    <property type="entry name" value="EfeO"/>
    <property type="match status" value="1"/>
</dbReference>
<dbReference type="NCBIfam" id="NF007697">
    <property type="entry name" value="PRK10378.1"/>
    <property type="match status" value="1"/>
</dbReference>
<dbReference type="PANTHER" id="PTHR39192">
    <property type="entry name" value="IRON UPTAKE SYSTEM COMPONENT EFEO"/>
    <property type="match status" value="1"/>
</dbReference>
<dbReference type="PANTHER" id="PTHR39192:SF1">
    <property type="entry name" value="IRON UPTAKE SYSTEM COMPONENT EFEO"/>
    <property type="match status" value="1"/>
</dbReference>
<dbReference type="Pfam" id="PF13473">
    <property type="entry name" value="Cupredoxin_1"/>
    <property type="match status" value="1"/>
</dbReference>
<dbReference type="Pfam" id="PF09375">
    <property type="entry name" value="Peptidase_M75"/>
    <property type="match status" value="1"/>
</dbReference>
<dbReference type="SUPFAM" id="SSF49503">
    <property type="entry name" value="Cupredoxins"/>
    <property type="match status" value="1"/>
</dbReference>
<name>EFEO_ECO57</name>
<accession>Q8XAS6</accession>
<accession>Q7AFM5</accession>
<protein>
    <recommendedName>
        <fullName>Iron uptake system component EfeO</fullName>
    </recommendedName>
</protein>
<keyword id="KW-0574">Periplasm</keyword>
<keyword id="KW-1185">Reference proteome</keyword>
<keyword id="KW-0732">Signal</keyword>
<proteinExistence type="evidence at protein level"/>